<comment type="subunit">
    <text evidence="1">Homodimer and heterodimers.</text>
</comment>
<comment type="subcellular location">
    <subcellularLocation>
        <location evidence="1">Cell membrane</location>
        <topology evidence="1">Multi-pass membrane protein</topology>
    </subcellularLocation>
</comment>
<comment type="similarity">
    <text evidence="3">Belongs to the Casparian strip membrane proteins (CASP) family.</text>
</comment>
<sequence>MASRKQGAREGLWSMGVRLLTTLLCITSLILLLKAKQTVRRALGLGYIAQTVKYSDTSGFIYLVYINILVAAYGLIVFVSLIPSALGKSCSGKCSRWTIFVLDQVFAYVLLSAVSAATEVLYLADKGMSKTQWEALCPTYGFFCHMVSASVAIGSVAVVLLAVLSVSSAQSLFHNFYTRALYTTKMRHSSLT</sequence>
<accession>P0DH84</accession>
<protein>
    <recommendedName>
        <fullName>CASP-like protein 2U1</fullName>
        <shortName>AcCASPL2U1</shortName>
    </recommendedName>
</protein>
<name>CSPL2_ADICA</name>
<organism>
    <name type="scientific">Adiantum capillus-veneris</name>
    <name type="common">Maidenhair fern</name>
    <dbReference type="NCBI Taxonomy" id="13818"/>
    <lineage>
        <taxon>Eukaryota</taxon>
        <taxon>Viridiplantae</taxon>
        <taxon>Streptophyta</taxon>
        <taxon>Embryophyta</taxon>
        <taxon>Tracheophyta</taxon>
        <taxon>Polypodiopsida</taxon>
        <taxon>Polypodiidae</taxon>
        <taxon>Polypodiales</taxon>
        <taxon>Pteridineae</taxon>
        <taxon>Pteridaceae</taxon>
        <taxon>Vittarioideae</taxon>
        <taxon>Adiantum</taxon>
    </lineage>
</organism>
<dbReference type="EMBL" id="DK958915">
    <property type="status" value="NOT_ANNOTATED_CDS"/>
    <property type="molecule type" value="mRNA"/>
</dbReference>
<dbReference type="EMBL" id="DK962487">
    <property type="status" value="NOT_ANNOTATED_CDS"/>
    <property type="molecule type" value="mRNA"/>
</dbReference>
<dbReference type="SMR" id="P0DH84"/>
<dbReference type="GO" id="GO:0005886">
    <property type="term" value="C:plasma membrane"/>
    <property type="evidence" value="ECO:0007669"/>
    <property type="project" value="UniProtKB-SubCell"/>
</dbReference>
<dbReference type="InterPro" id="IPR006459">
    <property type="entry name" value="CASP/CASPL"/>
</dbReference>
<dbReference type="InterPro" id="IPR006702">
    <property type="entry name" value="CASP_dom"/>
</dbReference>
<dbReference type="NCBIfam" id="TIGR01569">
    <property type="entry name" value="A_tha_TIGR01569"/>
    <property type="match status" value="1"/>
</dbReference>
<dbReference type="PANTHER" id="PTHR33573:SF30">
    <property type="entry name" value="CASP-LIKE PROTEIN 2C1-RELATED"/>
    <property type="match status" value="1"/>
</dbReference>
<dbReference type="PANTHER" id="PTHR33573">
    <property type="entry name" value="CASP-LIKE PROTEIN 4A4"/>
    <property type="match status" value="1"/>
</dbReference>
<dbReference type="Pfam" id="PF04535">
    <property type="entry name" value="CASP_dom"/>
    <property type="match status" value="1"/>
</dbReference>
<proteinExistence type="evidence at transcript level"/>
<keyword id="KW-1003">Cell membrane</keyword>
<keyword id="KW-0472">Membrane</keyword>
<keyword id="KW-0812">Transmembrane</keyword>
<keyword id="KW-1133">Transmembrane helix</keyword>
<evidence type="ECO:0000250" key="1"/>
<evidence type="ECO:0000255" key="2"/>
<evidence type="ECO:0000305" key="3"/>
<feature type="chain" id="PRO_0000412205" description="CASP-like protein 2U1">
    <location>
        <begin position="1"/>
        <end position="192"/>
    </location>
</feature>
<feature type="topological domain" description="Cytoplasmic" evidence="2">
    <location>
        <begin position="1"/>
        <end position="11"/>
    </location>
</feature>
<feature type="transmembrane region" description="Helical" evidence="2">
    <location>
        <begin position="12"/>
        <end position="32"/>
    </location>
</feature>
<feature type="topological domain" description="Extracellular" evidence="2">
    <location>
        <begin position="33"/>
        <end position="58"/>
    </location>
</feature>
<feature type="transmembrane region" description="Helical" evidence="2">
    <location>
        <begin position="59"/>
        <end position="79"/>
    </location>
</feature>
<feature type="topological domain" description="Cytoplasmic" evidence="2">
    <location>
        <begin position="80"/>
        <end position="96"/>
    </location>
</feature>
<feature type="transmembrane region" description="Helical" evidence="2">
    <location>
        <begin position="97"/>
        <end position="117"/>
    </location>
</feature>
<feature type="topological domain" description="Extracellular" evidence="2">
    <location>
        <begin position="118"/>
        <end position="145"/>
    </location>
</feature>
<feature type="transmembrane region" description="Helical" evidence="2">
    <location>
        <begin position="146"/>
        <end position="166"/>
    </location>
</feature>
<feature type="topological domain" description="Cytoplasmic" evidence="2">
    <location>
        <begin position="167"/>
        <end position="192"/>
    </location>
</feature>
<reference key="1">
    <citation type="journal article" date="2005" name="J. Plant Res.">
        <title>Analysis of expressed sequence tags in prothallia of Adiantum capillus-veneris.</title>
        <authorList>
            <person name="Yamauchi D."/>
            <person name="Sutoh K."/>
            <person name="Kanegae H."/>
            <person name="Horiguchi T."/>
            <person name="Matsuoka K."/>
            <person name="Fukuda H."/>
            <person name="Wada M."/>
        </authorList>
    </citation>
    <scope>NUCLEOTIDE SEQUENCE [LARGE SCALE MRNA]</scope>
    <source>
        <tissue>Prothallus</tissue>
    </source>
</reference>
<reference key="2">
    <citation type="journal article" date="2014" name="Plant Physiol.">
        <title>Functional and evolutionary analysis of the CASPARIAN STRIP MEMBRANE DOMAIN PROTEIN family.</title>
        <authorList>
            <person name="Roppolo D."/>
            <person name="Boeckmann B."/>
            <person name="Pfister A."/>
            <person name="Boutet E."/>
            <person name="Rubio M.C."/>
            <person name="Denervaud-Tendon V."/>
            <person name="Vermeer J.E."/>
            <person name="Gheyselinck J."/>
            <person name="Xenarios I."/>
            <person name="Geldner N."/>
        </authorList>
    </citation>
    <scope>GENE FAMILY</scope>
    <scope>NOMENCLATURE</scope>
</reference>